<evidence type="ECO:0000255" key="1">
    <source>
        <dbReference type="PROSITE-ProRule" id="PRU01330"/>
    </source>
</evidence>
<evidence type="ECO:0000255" key="2">
    <source>
        <dbReference type="PROSITE-ProRule" id="PRU01331"/>
    </source>
</evidence>
<evidence type="ECO:0000305" key="3"/>
<name>GLNA1_MAIZE</name>
<reference key="1">
    <citation type="journal article" date="1993" name="Plant Mol. Biol.">
        <title>Differential expression of six glutamine synthetase genes in Zea mays.</title>
        <authorList>
            <person name="Li M.-G."/>
            <person name="Villemur R."/>
            <person name="Hussey P.J."/>
            <person name="Silflow C.D."/>
            <person name="Gantt J.S."/>
            <person name="Snustad D.P."/>
        </authorList>
    </citation>
    <scope>NUCLEOTIDE SEQUENCE [MRNA]</scope>
    <source>
        <strain>cv. A188</strain>
        <tissue>Seedling</tissue>
    </source>
</reference>
<reference key="2">
    <citation type="journal article" date="1992" name="Plant Cell Physiol.">
        <title>Molecular cloning of the family of glutamine synthetase genes from maize: expression of genes for glutamine synthetase and ferredoxin-dependent glutamate synthase in photosynthetic and non-photosynthetic tissues.</title>
        <authorList>
            <person name="Sakakibara H."/>
            <person name="Kawabata S."/>
            <person name="Takahashi H."/>
            <person name="Hase T."/>
            <person name="Sugiyama T."/>
        </authorList>
    </citation>
    <scope>NUCLEOTIDE SEQUENCE [MRNA]</scope>
    <source>
        <strain>cv. Golden cross Bantam T51</strain>
        <tissue>Leaf</tissue>
    </source>
</reference>
<reference key="3">
    <citation type="submission" date="1995-03" db="EMBL/GenBank/DDBJ databases">
        <authorList>
            <person name="Sakakibara H."/>
        </authorList>
    </citation>
    <scope>SEQUENCE REVISION</scope>
</reference>
<keyword id="KW-0067">ATP-binding</keyword>
<keyword id="KW-0963">Cytoplasm</keyword>
<keyword id="KW-0436">Ligase</keyword>
<keyword id="KW-0547">Nucleotide-binding</keyword>
<keyword id="KW-1185">Reference proteome</keyword>
<protein>
    <recommendedName>
        <fullName>Glutamine synthetase root isozyme 1</fullName>
        <ecNumber>6.3.1.2</ecNumber>
    </recommendedName>
    <alternativeName>
        <fullName>GS122</fullName>
    </alternativeName>
    <alternativeName>
        <fullName>Glutamate--ammonia ligase</fullName>
    </alternativeName>
</protein>
<proteinExistence type="evidence at transcript level"/>
<sequence>MASLTDLVNLDLSDCTDRIIAEYIWIGGTGIDLRSKARTVKGPITDPIQLPKWNYDGSSTGQAPGEDSEVILYPQAIFKDPFRKGNHILVMCDCYTPQGEPIPTNKRYSAAKVFSHPDVAAEVPWYGIEQEYTLLQKDVSWPLGWPVGGYPGPQGPYYCAAGADKAFGRDVVDAHYKACLYAGINISGINGEVMPGQWEFQVGPSVGISAGDEIWVARYILERITEMAGIVLSLDPKPIKGDWNGAGAHTNYSTKSMREAGGYEVIKAAIDKLGKRHKEHIAAYGEGNERRLTGRHETADINTFKWGVANRGASIRVGRDTEREGKGYFEDRRPASNMDPYVVTGMIAETTILWNGN</sequence>
<comment type="function">
    <text>Plays a role in the flow of nitrogen into nitrogenous organic compounds.</text>
</comment>
<comment type="catalytic activity">
    <reaction>
        <text>L-glutamate + NH4(+) + ATP = L-glutamine + ADP + phosphate + H(+)</text>
        <dbReference type="Rhea" id="RHEA:16169"/>
        <dbReference type="ChEBI" id="CHEBI:15378"/>
        <dbReference type="ChEBI" id="CHEBI:28938"/>
        <dbReference type="ChEBI" id="CHEBI:29985"/>
        <dbReference type="ChEBI" id="CHEBI:30616"/>
        <dbReference type="ChEBI" id="CHEBI:43474"/>
        <dbReference type="ChEBI" id="CHEBI:58359"/>
        <dbReference type="ChEBI" id="CHEBI:456216"/>
        <dbReference type="EC" id="6.3.1.2"/>
    </reaction>
</comment>
<comment type="subunit">
    <text>Homooctamer.</text>
</comment>
<comment type="subcellular location">
    <subcellularLocation>
        <location>Cytoplasm</location>
    </subcellularLocation>
</comment>
<comment type="tissue specificity">
    <text>Found mainly in the cortical tissues of seedling roots, and in the root tip.</text>
</comment>
<comment type="similarity">
    <text evidence="3">Belongs to the glutamine synthetase family.</text>
</comment>
<accession>P38559</accession>
<gene>
    <name type="primary">GLN6</name>
    <name type="synonym">GS1-1</name>
</gene>
<organism>
    <name type="scientific">Zea mays</name>
    <name type="common">Maize</name>
    <dbReference type="NCBI Taxonomy" id="4577"/>
    <lineage>
        <taxon>Eukaryota</taxon>
        <taxon>Viridiplantae</taxon>
        <taxon>Streptophyta</taxon>
        <taxon>Embryophyta</taxon>
        <taxon>Tracheophyta</taxon>
        <taxon>Spermatophyta</taxon>
        <taxon>Magnoliopsida</taxon>
        <taxon>Liliopsida</taxon>
        <taxon>Poales</taxon>
        <taxon>Poaceae</taxon>
        <taxon>PACMAD clade</taxon>
        <taxon>Panicoideae</taxon>
        <taxon>Andropogonodae</taxon>
        <taxon>Andropogoneae</taxon>
        <taxon>Tripsacinae</taxon>
        <taxon>Zea</taxon>
    </lineage>
</organism>
<dbReference type="EC" id="6.3.1.2"/>
<dbReference type="EMBL" id="X65926">
    <property type="protein sequence ID" value="CAA46719.1"/>
    <property type="molecule type" value="mRNA"/>
</dbReference>
<dbReference type="EMBL" id="D14579">
    <property type="protein sequence ID" value="BAA03433.1"/>
    <property type="molecule type" value="mRNA"/>
</dbReference>
<dbReference type="PIR" id="S39477">
    <property type="entry name" value="S39477"/>
</dbReference>
<dbReference type="RefSeq" id="NP_001105538.1">
    <property type="nucleotide sequence ID" value="NM_001112068.2"/>
</dbReference>
<dbReference type="SMR" id="P38559"/>
<dbReference type="FunCoup" id="P38559">
    <property type="interactions" value="2169"/>
</dbReference>
<dbReference type="STRING" id="4577.P38559"/>
<dbReference type="PaxDb" id="4577-GRMZM2G050514_P03"/>
<dbReference type="GeneID" id="542520"/>
<dbReference type="KEGG" id="zma:542520"/>
<dbReference type="MaizeGDB" id="17151"/>
<dbReference type="eggNOG" id="KOG0683">
    <property type="taxonomic scope" value="Eukaryota"/>
</dbReference>
<dbReference type="InParanoid" id="P38559"/>
<dbReference type="OrthoDB" id="1936100at2759"/>
<dbReference type="SABIO-RK" id="P38559"/>
<dbReference type="Proteomes" id="UP000007305">
    <property type="component" value="Unplaced"/>
</dbReference>
<dbReference type="ExpressionAtlas" id="P38559">
    <property type="expression patterns" value="baseline and differential"/>
</dbReference>
<dbReference type="GO" id="GO:0005737">
    <property type="term" value="C:cytoplasm"/>
    <property type="evidence" value="ECO:0000318"/>
    <property type="project" value="GO_Central"/>
</dbReference>
<dbReference type="GO" id="GO:0005524">
    <property type="term" value="F:ATP binding"/>
    <property type="evidence" value="ECO:0007669"/>
    <property type="project" value="UniProtKB-KW"/>
</dbReference>
<dbReference type="GO" id="GO:0004356">
    <property type="term" value="F:glutamine synthetase activity"/>
    <property type="evidence" value="ECO:0000318"/>
    <property type="project" value="GO_Central"/>
</dbReference>
<dbReference type="GO" id="GO:0006542">
    <property type="term" value="P:glutamine biosynthetic process"/>
    <property type="evidence" value="ECO:0000318"/>
    <property type="project" value="GO_Central"/>
</dbReference>
<dbReference type="FunFam" id="3.30.590.10:FF:000004">
    <property type="entry name" value="Glutamine synthetase"/>
    <property type="match status" value="1"/>
</dbReference>
<dbReference type="FunFam" id="3.10.20.70:FF:000003">
    <property type="entry name" value="Glutamine synthetase, chloroplastic"/>
    <property type="match status" value="1"/>
</dbReference>
<dbReference type="Gene3D" id="3.10.20.70">
    <property type="entry name" value="Glutamine synthetase, N-terminal domain"/>
    <property type="match status" value="1"/>
</dbReference>
<dbReference type="Gene3D" id="3.30.590.10">
    <property type="entry name" value="Glutamine synthetase/guanido kinase, catalytic domain"/>
    <property type="match status" value="1"/>
</dbReference>
<dbReference type="InterPro" id="IPR008147">
    <property type="entry name" value="Gln_synt_N"/>
</dbReference>
<dbReference type="InterPro" id="IPR036651">
    <property type="entry name" value="Gln_synt_N_sf"/>
</dbReference>
<dbReference type="InterPro" id="IPR014746">
    <property type="entry name" value="Gln_synth/guanido_kin_cat_dom"/>
</dbReference>
<dbReference type="InterPro" id="IPR008146">
    <property type="entry name" value="Gln_synth_cat_dom"/>
</dbReference>
<dbReference type="InterPro" id="IPR027303">
    <property type="entry name" value="Gln_synth_gly_rich_site"/>
</dbReference>
<dbReference type="InterPro" id="IPR027302">
    <property type="entry name" value="Gln_synth_N_conserv_site"/>
</dbReference>
<dbReference type="InterPro" id="IPR050292">
    <property type="entry name" value="Glutamine_Synthetase"/>
</dbReference>
<dbReference type="PANTHER" id="PTHR20852">
    <property type="entry name" value="GLUTAMINE SYNTHETASE"/>
    <property type="match status" value="1"/>
</dbReference>
<dbReference type="PANTHER" id="PTHR20852:SF109">
    <property type="entry name" value="GLUTAMINE SYNTHETASE CYTOSOLIC ISOZYME 1-2"/>
    <property type="match status" value="1"/>
</dbReference>
<dbReference type="Pfam" id="PF00120">
    <property type="entry name" value="Gln-synt_C"/>
    <property type="match status" value="1"/>
</dbReference>
<dbReference type="Pfam" id="PF03951">
    <property type="entry name" value="Gln-synt_N"/>
    <property type="match status" value="1"/>
</dbReference>
<dbReference type="SMART" id="SM01230">
    <property type="entry name" value="Gln-synt_C"/>
    <property type="match status" value="1"/>
</dbReference>
<dbReference type="SUPFAM" id="SSF54368">
    <property type="entry name" value="Glutamine synthetase, N-terminal domain"/>
    <property type="match status" value="1"/>
</dbReference>
<dbReference type="SUPFAM" id="SSF55931">
    <property type="entry name" value="Glutamine synthetase/guanido kinase"/>
    <property type="match status" value="1"/>
</dbReference>
<dbReference type="PROSITE" id="PS00180">
    <property type="entry name" value="GLNA_1"/>
    <property type="match status" value="1"/>
</dbReference>
<dbReference type="PROSITE" id="PS00181">
    <property type="entry name" value="GLNA_ATP"/>
    <property type="match status" value="1"/>
</dbReference>
<dbReference type="PROSITE" id="PS51986">
    <property type="entry name" value="GS_BETA_GRASP"/>
    <property type="match status" value="1"/>
</dbReference>
<dbReference type="PROSITE" id="PS51987">
    <property type="entry name" value="GS_CATALYTIC"/>
    <property type="match status" value="1"/>
</dbReference>
<feature type="chain" id="PRO_0000153178" description="Glutamine synthetase root isozyme 1">
    <location>
        <begin position="1"/>
        <end position="357"/>
    </location>
</feature>
<feature type="domain" description="GS beta-grasp" evidence="1">
    <location>
        <begin position="19"/>
        <end position="99"/>
    </location>
</feature>
<feature type="domain" description="GS catalytic" evidence="2">
    <location>
        <begin position="106"/>
        <end position="357"/>
    </location>
</feature>
<feature type="sequence conflict" description="In Ref. 2; BAA03433." evidence="3" ref="2">
    <original>I</original>
    <variation>S</variation>
    <location>
        <position position="48"/>
    </location>
</feature>